<sequence>MGAYKYMQELWRKKQSNVMRFLLRVRCWQYRQLSSLHRAPRPTRPDKARRLGYKAKQGYVIYRIRVRRGGRKRPVPKGATYGKPVHHGVNQIKFARSLQSVAEERAGRHCGGLRVLNSYWVGEDSTYKFFEVILIDTFHKAIRRNPDTQWITKAVHKHREMRGLTSAGKKSRGLGKGHKFHLTIGGSRRAAWKRRNTLQLHRYR</sequence>
<comment type="function">
    <text evidence="2">Component of the large ribosomal subunit. The ribosome is a large ribonucleoprotein complex responsible for the synthesis of proteins in the cell.</text>
</comment>
<comment type="subunit">
    <text evidence="2">Component of the large ribosomal subunit.</text>
</comment>
<comment type="subcellular location">
    <subcellularLocation>
        <location evidence="2">Cytoplasm</location>
    </subcellularLocation>
</comment>
<comment type="similarity">
    <text evidence="3">Belongs to the eukaryotic ribosomal protein eL15 family.</text>
</comment>
<accession>Q7T3P0</accession>
<keyword id="KW-0963">Cytoplasm</keyword>
<keyword id="KW-0687">Ribonucleoprotein</keyword>
<keyword id="KW-0689">Ribosomal protein</keyword>
<organism>
    <name type="scientific">Hypophthalmichthys nobilis</name>
    <name type="common">Bighead carp</name>
    <name type="synonym">Aristichthys nobilis</name>
    <dbReference type="NCBI Taxonomy" id="7965"/>
    <lineage>
        <taxon>Eukaryota</taxon>
        <taxon>Metazoa</taxon>
        <taxon>Chordata</taxon>
        <taxon>Craniata</taxon>
        <taxon>Vertebrata</taxon>
        <taxon>Euteleostomi</taxon>
        <taxon>Actinopterygii</taxon>
        <taxon>Neopterygii</taxon>
        <taxon>Teleostei</taxon>
        <taxon>Ostariophysi</taxon>
        <taxon>Cypriniformes</taxon>
        <taxon>Xenocyprididae</taxon>
        <taxon>Xenocypridinae</taxon>
        <taxon>Hypophthalmichthys</taxon>
    </lineage>
</organism>
<protein>
    <recommendedName>
        <fullName evidence="3">Large ribosomal subunit protein eL15</fullName>
    </recommendedName>
    <alternativeName>
        <fullName>60S ribosomal protein L15</fullName>
    </alternativeName>
</protein>
<dbReference type="EMBL" id="AY249412">
    <property type="protein sequence ID" value="AAP35249.1"/>
    <property type="molecule type" value="mRNA"/>
</dbReference>
<dbReference type="SMR" id="Q7T3P0"/>
<dbReference type="GO" id="GO:0022625">
    <property type="term" value="C:cytosolic large ribosomal subunit"/>
    <property type="evidence" value="ECO:0007669"/>
    <property type="project" value="TreeGrafter"/>
</dbReference>
<dbReference type="GO" id="GO:0003723">
    <property type="term" value="F:RNA binding"/>
    <property type="evidence" value="ECO:0007669"/>
    <property type="project" value="TreeGrafter"/>
</dbReference>
<dbReference type="GO" id="GO:0003735">
    <property type="term" value="F:structural constituent of ribosome"/>
    <property type="evidence" value="ECO:0007669"/>
    <property type="project" value="InterPro"/>
</dbReference>
<dbReference type="GO" id="GO:0002181">
    <property type="term" value="P:cytoplasmic translation"/>
    <property type="evidence" value="ECO:0007669"/>
    <property type="project" value="TreeGrafter"/>
</dbReference>
<dbReference type="FunFam" id="3.40.1120.10:FF:000001">
    <property type="entry name" value="Ribosomal protein L15"/>
    <property type="match status" value="1"/>
</dbReference>
<dbReference type="Gene3D" id="3.40.1120.10">
    <property type="entry name" value="Ribosomal protein l15e"/>
    <property type="match status" value="1"/>
</dbReference>
<dbReference type="InterPro" id="IPR024794">
    <property type="entry name" value="Rbsml_eL15_core_dom_sf"/>
</dbReference>
<dbReference type="InterPro" id="IPR000439">
    <property type="entry name" value="Ribosomal_eL15"/>
</dbReference>
<dbReference type="InterPro" id="IPR020925">
    <property type="entry name" value="Ribosomal_eL15_CS"/>
</dbReference>
<dbReference type="InterPro" id="IPR012678">
    <property type="entry name" value="Ribosomal_uL23/eL15/eS24_sf"/>
</dbReference>
<dbReference type="NCBIfam" id="NF003269">
    <property type="entry name" value="PRK04243.1"/>
    <property type="match status" value="1"/>
</dbReference>
<dbReference type="PANTHER" id="PTHR11847:SF4">
    <property type="entry name" value="LARGE RIBOSOMAL SUBUNIT PROTEIN EL15"/>
    <property type="match status" value="1"/>
</dbReference>
<dbReference type="PANTHER" id="PTHR11847">
    <property type="entry name" value="RIBOSOMAL PROTEIN L15"/>
    <property type="match status" value="1"/>
</dbReference>
<dbReference type="Pfam" id="PF00827">
    <property type="entry name" value="Ribosomal_L15e"/>
    <property type="match status" value="1"/>
</dbReference>
<dbReference type="SMART" id="SM01384">
    <property type="entry name" value="Ribosomal_L15e"/>
    <property type="match status" value="1"/>
</dbReference>
<dbReference type="SUPFAM" id="SSF54189">
    <property type="entry name" value="Ribosomal proteins S24e, L23 and L15e"/>
    <property type="match status" value="1"/>
</dbReference>
<dbReference type="PROSITE" id="PS01194">
    <property type="entry name" value="RIBOSOMAL_L15E"/>
    <property type="match status" value="1"/>
</dbReference>
<name>RL15_HYPNO</name>
<gene>
    <name type="primary">rpl15</name>
</gene>
<evidence type="ECO:0000250" key="1"/>
<evidence type="ECO:0000250" key="2">
    <source>
        <dbReference type="UniProtKB" id="P61313"/>
    </source>
</evidence>
<evidence type="ECO:0000305" key="3"/>
<feature type="initiator methionine" description="Removed" evidence="1">
    <location>
        <position position="1"/>
    </location>
</feature>
<feature type="chain" id="PRO_0000127534" description="Large ribosomal subunit protein eL15">
    <location>
        <begin position="2"/>
        <end position="204"/>
    </location>
</feature>
<reference key="1">
    <citation type="submission" date="2003-03" db="EMBL/GenBank/DDBJ databases">
        <title>Evaluating the potential of ribosomal protein L15 as a novel marker for phylogenetic analysis: a comparative analysis of 15 teleost RPL15 cDNAs.</title>
        <authorList>
            <person name="Song P."/>
            <person name="Zhang J."/>
            <person name="Xiang Z."/>
        </authorList>
    </citation>
    <scope>NUCLEOTIDE SEQUENCE [MRNA]</scope>
    <source>
        <tissue>Liver</tissue>
    </source>
</reference>
<proteinExistence type="evidence at transcript level"/>